<reference key="1">
    <citation type="journal article" date="2005" name="Proc. Natl. Acad. Sci. U.S.A.">
        <title>Increased hypothalamic GPR54 signaling: a potential mechanism for initiation of puberty in primates.</title>
        <authorList>
            <person name="Shahab M."/>
            <person name="Mastronardi C."/>
            <person name="Seminara S.B."/>
            <person name="Crowley W.F."/>
            <person name="Ojeda S.R."/>
            <person name="Plant T.M."/>
        </authorList>
    </citation>
    <scope>NUCLEOTIDE SEQUENCE [MRNA]</scope>
    <scope>FUNCTION</scope>
    <scope>TISSUE SPECIFICITY</scope>
    <source>
        <tissue>Hypothalamus</tissue>
    </source>
</reference>
<evidence type="ECO:0000250" key="1">
    <source>
        <dbReference type="UniProtKB" id="Q15726"/>
    </source>
</evidence>
<evidence type="ECO:0000256" key="2">
    <source>
        <dbReference type="SAM" id="MobiDB-lite"/>
    </source>
</evidence>
<evidence type="ECO:0000269" key="3">
    <source>
    </source>
</evidence>
<evidence type="ECO:0000305" key="4"/>
<protein>
    <recommendedName>
        <fullName>Metastasis-suppressor KiSS-1</fullName>
    </recommendedName>
    <alternativeName>
        <fullName>Kisspeptin-1</fullName>
    </alternativeName>
    <component>
        <recommendedName>
            <fullName>Metastin</fullName>
        </recommendedName>
    </component>
    <component>
        <recommendedName>
            <fullName>Kisspeptin-10</fullName>
        </recommendedName>
    </component>
</protein>
<name>KISS1_MACMU</name>
<keyword id="KW-0165">Cleavage on pair of basic residues</keyword>
<keyword id="KW-0597">Phosphoprotein</keyword>
<keyword id="KW-1185">Reference proteome</keyword>
<keyword id="KW-0964">Secreted</keyword>
<gene>
    <name type="primary">KISS1</name>
</gene>
<dbReference type="EMBL" id="AY823262">
    <property type="protein sequence ID" value="AAV70983.1"/>
    <property type="molecule type" value="mRNA"/>
</dbReference>
<dbReference type="STRING" id="9544.ENSMMUP00000004863"/>
<dbReference type="PaxDb" id="9544-ENSMMUP00000038127"/>
<dbReference type="eggNOG" id="ENOG502SFM2">
    <property type="taxonomic scope" value="Eukaryota"/>
</dbReference>
<dbReference type="HOGENOM" id="CLU_119112_0_0_1"/>
<dbReference type="InParanoid" id="Q5PXH1"/>
<dbReference type="Proteomes" id="UP000006718">
    <property type="component" value="Unassembled WGS sequence"/>
</dbReference>
<dbReference type="GO" id="GO:0005576">
    <property type="term" value="C:extracellular region"/>
    <property type="evidence" value="ECO:0007669"/>
    <property type="project" value="UniProtKB-SubCell"/>
</dbReference>
<dbReference type="GO" id="GO:0031773">
    <property type="term" value="F:kisspeptin receptor binding"/>
    <property type="evidence" value="ECO:0000318"/>
    <property type="project" value="GO_Central"/>
</dbReference>
<dbReference type="GO" id="GO:0007186">
    <property type="term" value="P:G protein-coupled receptor signaling pathway"/>
    <property type="evidence" value="ECO:0000318"/>
    <property type="project" value="GO_Central"/>
</dbReference>
<dbReference type="GO" id="GO:0007204">
    <property type="term" value="P:positive regulation of cytosolic calcium ion concentration"/>
    <property type="evidence" value="ECO:0000318"/>
    <property type="project" value="GO_Central"/>
</dbReference>
<dbReference type="InterPro" id="IPR020207">
    <property type="entry name" value="Metastasis-suppressor_KiSS-1"/>
</dbReference>
<dbReference type="PANTHER" id="PTHR16955">
    <property type="entry name" value="METASTASIS-SUPPRESSOR KISS-1"/>
    <property type="match status" value="1"/>
</dbReference>
<dbReference type="PANTHER" id="PTHR16955:SF6">
    <property type="entry name" value="METASTASIS-SUPPRESSOR KISS-1"/>
    <property type="match status" value="1"/>
</dbReference>
<dbReference type="Pfam" id="PF15152">
    <property type="entry name" value="Kisspeptin"/>
    <property type="match status" value="1"/>
</dbReference>
<accession>Q5PXH1</accession>
<comment type="function">
    <text evidence="3">Metastasis suppressor protein. May regulate events downstream of cell-matrix adhesion, perhaps involving cytoskeletal reorganization. Generates a C-terminally amidated peptide, metastin which functions as the endogenous ligand of the G-protein coupled receptor GPR54. The receptor is essential for normal gonadotropin-released hormone physiology and for puberty. The hypothalamic KiSS1/GPR54 system is a pivotal factor in central regulation of the gonadotropic axis at puberty and in adulthood.</text>
</comment>
<comment type="subcellular location">
    <subcellularLocation>
        <location>Secreted</location>
    </subcellularLocation>
</comment>
<comment type="tissue specificity">
    <text evidence="3">In the hypothalamus, expression increases with puberty in both male and female monkeys. Robust expression in the region of the arcuate nucleus (ARC).</text>
</comment>
<comment type="similarity">
    <text evidence="4">Belongs to the KISS1 family.</text>
</comment>
<organism>
    <name type="scientific">Macaca mulatta</name>
    <name type="common">Rhesus macaque</name>
    <dbReference type="NCBI Taxonomy" id="9544"/>
    <lineage>
        <taxon>Eukaryota</taxon>
        <taxon>Metazoa</taxon>
        <taxon>Chordata</taxon>
        <taxon>Craniata</taxon>
        <taxon>Vertebrata</taxon>
        <taxon>Euteleostomi</taxon>
        <taxon>Mammalia</taxon>
        <taxon>Eutheria</taxon>
        <taxon>Euarchontoglires</taxon>
        <taxon>Primates</taxon>
        <taxon>Haplorrhini</taxon>
        <taxon>Catarrhini</taxon>
        <taxon>Cercopithecidae</taxon>
        <taxon>Cercopithecinae</taxon>
        <taxon>Macaca</taxon>
    </lineage>
</organism>
<sequence length="88" mass="9514">SVENSRPTGQQLESLDLSAPWEQSLPCTERKPSATARLSRRGASLSSPAESSGSPQRRGLSAPSSRQIPAPQGAVLVQREKDLPNYNW</sequence>
<proteinExistence type="evidence at transcript level"/>
<feature type="chain" id="PRO_0000021549" description="Metastasis-suppressor KiSS-1">
    <location>
        <begin position="1" status="less than"/>
        <end position="88" status="greater than"/>
    </location>
</feature>
<feature type="peptide" id="PRO_0000021550" description="Metastin">
    <location>
        <begin position="42"/>
        <end position="88" status="greater than"/>
    </location>
</feature>
<feature type="peptide" id="PRO_0000021551" description="Kisspeptin-10">
    <location>
        <begin position="86"/>
        <end position="88" status="greater than"/>
    </location>
</feature>
<feature type="region of interest" description="Disordered" evidence="2">
    <location>
        <begin position="1"/>
        <end position="88"/>
    </location>
</feature>
<feature type="compositionally biased region" description="Polar residues" evidence="2">
    <location>
        <begin position="1"/>
        <end position="13"/>
    </location>
</feature>
<feature type="compositionally biased region" description="Low complexity" evidence="2">
    <location>
        <begin position="33"/>
        <end position="55"/>
    </location>
</feature>
<feature type="compositionally biased region" description="Basic and acidic residues" evidence="2">
    <location>
        <begin position="78"/>
        <end position="88"/>
    </location>
</feature>
<feature type="modified residue" description="Phosphotyrosine" evidence="1">
    <location>
        <position position="86"/>
    </location>
</feature>
<feature type="non-terminal residue">
    <location>
        <position position="1"/>
    </location>
</feature>
<feature type="non-terminal residue">
    <location>
        <position position="88"/>
    </location>
</feature>